<sequence length="590" mass="65897">MRTEYCGQLRLSHVGQQVTLCGWVNRRRDLGSLIFIDMRDREGIVQVFFDPDRADALKLASELRNEFCIQVTGTVRARDEKNINRDMATGEIEVLASSLTIINRADVLPLDSNHVNTEEARLKYRYLDLRRPEMAQRLKTRAKITSLVRRFMDDHGFLDIETPMLTKATPEGARDYLVPSRVHKGKFYALPQSPQLFKQLLMMSGFDRYYQIVKCFRDEDLRADRQPEFTQIDVETSFMTAPQVREVMEALVRHLWLEVKGVDLGDFPVMTFAEAERRYGSDKPDLRNPMELTDVADLLKSVEFAVFAGPANDPKGRVAALRVPGGASLTRKQIDEYGNFVKIYGAKGLAYIKVNERAKGLEGINSPVAKFLNAEIIEAILDRTAAQDGDMIFFGADNKKIVADAMGALRLKVGKDLGLTDESKWAPLWVIDFPMFEDDGEGGLTAMHHPFTSPKDMTAAELKAAPENAVANAYDMVINGYEVGGGSVRIHNGDMQQTVFGILGINEEEQREKFGFLLDALKYGTPPHAGLAFGLDRLTMLLTGTDNIRDVIAFPKTTAAACLMTEAPSFANPTVLAELSIQVVKKAENN</sequence>
<feature type="chain" id="PRO_0000235558" description="Aspartate--tRNA ligase">
    <location>
        <begin position="1"/>
        <end position="590"/>
    </location>
</feature>
<feature type="region of interest" description="Aspartate" evidence="1">
    <location>
        <begin position="195"/>
        <end position="198"/>
    </location>
</feature>
<feature type="binding site" evidence="1">
    <location>
        <position position="171"/>
    </location>
    <ligand>
        <name>L-aspartate</name>
        <dbReference type="ChEBI" id="CHEBI:29991"/>
    </ligand>
</feature>
<feature type="binding site" evidence="1">
    <location>
        <begin position="217"/>
        <end position="219"/>
    </location>
    <ligand>
        <name>ATP</name>
        <dbReference type="ChEBI" id="CHEBI:30616"/>
    </ligand>
</feature>
<feature type="binding site" evidence="1">
    <location>
        <position position="217"/>
    </location>
    <ligand>
        <name>L-aspartate</name>
        <dbReference type="ChEBI" id="CHEBI:29991"/>
    </ligand>
</feature>
<feature type="binding site" evidence="1">
    <location>
        <position position="226"/>
    </location>
    <ligand>
        <name>ATP</name>
        <dbReference type="ChEBI" id="CHEBI:30616"/>
    </ligand>
</feature>
<feature type="binding site" evidence="1">
    <location>
        <position position="448"/>
    </location>
    <ligand>
        <name>L-aspartate</name>
        <dbReference type="ChEBI" id="CHEBI:29991"/>
    </ligand>
</feature>
<feature type="binding site" evidence="1">
    <location>
        <position position="482"/>
    </location>
    <ligand>
        <name>ATP</name>
        <dbReference type="ChEBI" id="CHEBI:30616"/>
    </ligand>
</feature>
<feature type="binding site" evidence="1">
    <location>
        <position position="489"/>
    </location>
    <ligand>
        <name>L-aspartate</name>
        <dbReference type="ChEBI" id="CHEBI:29991"/>
    </ligand>
</feature>
<feature type="binding site" evidence="1">
    <location>
        <begin position="534"/>
        <end position="537"/>
    </location>
    <ligand>
        <name>ATP</name>
        <dbReference type="ChEBI" id="CHEBI:30616"/>
    </ligand>
</feature>
<protein>
    <recommendedName>
        <fullName evidence="1">Aspartate--tRNA ligase</fullName>
        <ecNumber evidence="1">6.1.1.12</ecNumber>
    </recommendedName>
    <alternativeName>
        <fullName evidence="1">Aspartyl-tRNA synthetase</fullName>
        <shortName evidence="1">AspRS</shortName>
    </alternativeName>
</protein>
<reference key="1">
    <citation type="journal article" date="2005" name="Nucleic Acids Res.">
        <title>Genome dynamics and diversity of Shigella species, the etiologic agents of bacillary dysentery.</title>
        <authorList>
            <person name="Yang F."/>
            <person name="Yang J."/>
            <person name="Zhang X."/>
            <person name="Chen L."/>
            <person name="Jiang Y."/>
            <person name="Yan Y."/>
            <person name="Tang X."/>
            <person name="Wang J."/>
            <person name="Xiong Z."/>
            <person name="Dong J."/>
            <person name="Xue Y."/>
            <person name="Zhu Y."/>
            <person name="Xu X."/>
            <person name="Sun L."/>
            <person name="Chen S."/>
            <person name="Nie H."/>
            <person name="Peng J."/>
            <person name="Xu J."/>
            <person name="Wang Y."/>
            <person name="Yuan Z."/>
            <person name="Wen Y."/>
            <person name="Yao Z."/>
            <person name="Shen Y."/>
            <person name="Qiang B."/>
            <person name="Hou Y."/>
            <person name="Yu J."/>
            <person name="Jin Q."/>
        </authorList>
    </citation>
    <scope>NUCLEOTIDE SEQUENCE [LARGE SCALE GENOMIC DNA]</scope>
    <source>
        <strain>Ss046</strain>
    </source>
</reference>
<accession>Q3Z2M4</accession>
<comment type="function">
    <text evidence="1">Catalyzes the attachment of L-aspartate to tRNA(Asp) in a two-step reaction: L-aspartate is first activated by ATP to form Asp-AMP and then transferred to the acceptor end of tRNA(Asp).</text>
</comment>
<comment type="catalytic activity">
    <reaction evidence="1">
        <text>tRNA(Asp) + L-aspartate + ATP = L-aspartyl-tRNA(Asp) + AMP + diphosphate</text>
        <dbReference type="Rhea" id="RHEA:19649"/>
        <dbReference type="Rhea" id="RHEA-COMP:9660"/>
        <dbReference type="Rhea" id="RHEA-COMP:9678"/>
        <dbReference type="ChEBI" id="CHEBI:29991"/>
        <dbReference type="ChEBI" id="CHEBI:30616"/>
        <dbReference type="ChEBI" id="CHEBI:33019"/>
        <dbReference type="ChEBI" id="CHEBI:78442"/>
        <dbReference type="ChEBI" id="CHEBI:78516"/>
        <dbReference type="ChEBI" id="CHEBI:456215"/>
        <dbReference type="EC" id="6.1.1.12"/>
    </reaction>
</comment>
<comment type="subunit">
    <text evidence="1">Homodimer.</text>
</comment>
<comment type="subcellular location">
    <subcellularLocation>
        <location evidence="1">Cytoplasm</location>
    </subcellularLocation>
</comment>
<comment type="similarity">
    <text evidence="1">Belongs to the class-II aminoacyl-tRNA synthetase family. Type 1 subfamily.</text>
</comment>
<proteinExistence type="inferred from homology"/>
<keyword id="KW-0030">Aminoacyl-tRNA synthetase</keyword>
<keyword id="KW-0067">ATP-binding</keyword>
<keyword id="KW-0963">Cytoplasm</keyword>
<keyword id="KW-0436">Ligase</keyword>
<keyword id="KW-0547">Nucleotide-binding</keyword>
<keyword id="KW-0648">Protein biosynthesis</keyword>
<keyword id="KW-1185">Reference proteome</keyword>
<dbReference type="EC" id="6.1.1.12" evidence="1"/>
<dbReference type="EMBL" id="CP000038">
    <property type="protein sequence ID" value="AAZ87988.1"/>
    <property type="molecule type" value="Genomic_DNA"/>
</dbReference>
<dbReference type="RefSeq" id="WP_001258664.1">
    <property type="nucleotide sequence ID" value="NC_007384.1"/>
</dbReference>
<dbReference type="SMR" id="Q3Z2M4"/>
<dbReference type="GeneID" id="93776141"/>
<dbReference type="KEGG" id="ssn:SSON_1275"/>
<dbReference type="HOGENOM" id="CLU_014330_3_2_6"/>
<dbReference type="Proteomes" id="UP000002529">
    <property type="component" value="Chromosome"/>
</dbReference>
<dbReference type="GO" id="GO:0005737">
    <property type="term" value="C:cytoplasm"/>
    <property type="evidence" value="ECO:0007669"/>
    <property type="project" value="UniProtKB-SubCell"/>
</dbReference>
<dbReference type="GO" id="GO:0004815">
    <property type="term" value="F:aspartate-tRNA ligase activity"/>
    <property type="evidence" value="ECO:0007669"/>
    <property type="project" value="UniProtKB-UniRule"/>
</dbReference>
<dbReference type="GO" id="GO:0005524">
    <property type="term" value="F:ATP binding"/>
    <property type="evidence" value="ECO:0007669"/>
    <property type="project" value="UniProtKB-UniRule"/>
</dbReference>
<dbReference type="GO" id="GO:0003676">
    <property type="term" value="F:nucleic acid binding"/>
    <property type="evidence" value="ECO:0007669"/>
    <property type="project" value="InterPro"/>
</dbReference>
<dbReference type="GO" id="GO:0006422">
    <property type="term" value="P:aspartyl-tRNA aminoacylation"/>
    <property type="evidence" value="ECO:0007669"/>
    <property type="project" value="UniProtKB-UniRule"/>
</dbReference>
<dbReference type="CDD" id="cd00777">
    <property type="entry name" value="AspRS_core"/>
    <property type="match status" value="1"/>
</dbReference>
<dbReference type="CDD" id="cd04317">
    <property type="entry name" value="EcAspRS_like_N"/>
    <property type="match status" value="1"/>
</dbReference>
<dbReference type="FunFam" id="2.40.50.140:FF:000080">
    <property type="entry name" value="Aspartate--tRNA ligase"/>
    <property type="match status" value="1"/>
</dbReference>
<dbReference type="FunFam" id="3.30.1360.30:FF:000001">
    <property type="entry name" value="Aspartate--tRNA ligase"/>
    <property type="match status" value="1"/>
</dbReference>
<dbReference type="Gene3D" id="3.30.930.10">
    <property type="entry name" value="Bira Bifunctional Protein, Domain 2"/>
    <property type="match status" value="1"/>
</dbReference>
<dbReference type="Gene3D" id="3.30.1360.30">
    <property type="entry name" value="GAD-like domain"/>
    <property type="match status" value="1"/>
</dbReference>
<dbReference type="Gene3D" id="2.40.50.140">
    <property type="entry name" value="Nucleic acid-binding proteins"/>
    <property type="match status" value="1"/>
</dbReference>
<dbReference type="HAMAP" id="MF_00044">
    <property type="entry name" value="Asp_tRNA_synth_type1"/>
    <property type="match status" value="1"/>
</dbReference>
<dbReference type="InterPro" id="IPR004364">
    <property type="entry name" value="Aa-tRNA-synt_II"/>
</dbReference>
<dbReference type="InterPro" id="IPR006195">
    <property type="entry name" value="aa-tRNA-synth_II"/>
</dbReference>
<dbReference type="InterPro" id="IPR045864">
    <property type="entry name" value="aa-tRNA-synth_II/BPL/LPL"/>
</dbReference>
<dbReference type="InterPro" id="IPR004524">
    <property type="entry name" value="Asp-tRNA-ligase_1"/>
</dbReference>
<dbReference type="InterPro" id="IPR047089">
    <property type="entry name" value="Asp-tRNA-ligase_1_N"/>
</dbReference>
<dbReference type="InterPro" id="IPR002312">
    <property type="entry name" value="Asp/Asn-tRNA-synth_IIb"/>
</dbReference>
<dbReference type="InterPro" id="IPR047090">
    <property type="entry name" value="AspRS_core"/>
</dbReference>
<dbReference type="InterPro" id="IPR004115">
    <property type="entry name" value="GAD-like_sf"/>
</dbReference>
<dbReference type="InterPro" id="IPR029351">
    <property type="entry name" value="GAD_dom"/>
</dbReference>
<dbReference type="InterPro" id="IPR012340">
    <property type="entry name" value="NA-bd_OB-fold"/>
</dbReference>
<dbReference type="InterPro" id="IPR004365">
    <property type="entry name" value="NA-bd_OB_tRNA"/>
</dbReference>
<dbReference type="NCBIfam" id="TIGR00459">
    <property type="entry name" value="aspS_bact"/>
    <property type="match status" value="1"/>
</dbReference>
<dbReference type="NCBIfam" id="NF001750">
    <property type="entry name" value="PRK00476.1"/>
    <property type="match status" value="1"/>
</dbReference>
<dbReference type="PANTHER" id="PTHR22594:SF5">
    <property type="entry name" value="ASPARTATE--TRNA LIGASE, MITOCHONDRIAL"/>
    <property type="match status" value="1"/>
</dbReference>
<dbReference type="PANTHER" id="PTHR22594">
    <property type="entry name" value="ASPARTYL/LYSYL-TRNA SYNTHETASE"/>
    <property type="match status" value="1"/>
</dbReference>
<dbReference type="Pfam" id="PF02938">
    <property type="entry name" value="GAD"/>
    <property type="match status" value="1"/>
</dbReference>
<dbReference type="Pfam" id="PF00152">
    <property type="entry name" value="tRNA-synt_2"/>
    <property type="match status" value="1"/>
</dbReference>
<dbReference type="Pfam" id="PF01336">
    <property type="entry name" value="tRNA_anti-codon"/>
    <property type="match status" value="1"/>
</dbReference>
<dbReference type="PRINTS" id="PR01042">
    <property type="entry name" value="TRNASYNTHASP"/>
</dbReference>
<dbReference type="SUPFAM" id="SSF55681">
    <property type="entry name" value="Class II aaRS and biotin synthetases"/>
    <property type="match status" value="1"/>
</dbReference>
<dbReference type="SUPFAM" id="SSF55261">
    <property type="entry name" value="GAD domain-like"/>
    <property type="match status" value="1"/>
</dbReference>
<dbReference type="SUPFAM" id="SSF50249">
    <property type="entry name" value="Nucleic acid-binding proteins"/>
    <property type="match status" value="1"/>
</dbReference>
<dbReference type="PROSITE" id="PS50862">
    <property type="entry name" value="AA_TRNA_LIGASE_II"/>
    <property type="match status" value="1"/>
</dbReference>
<gene>
    <name evidence="1" type="primary">aspS</name>
    <name type="ordered locus">SSON_1275</name>
</gene>
<organism>
    <name type="scientific">Shigella sonnei (strain Ss046)</name>
    <dbReference type="NCBI Taxonomy" id="300269"/>
    <lineage>
        <taxon>Bacteria</taxon>
        <taxon>Pseudomonadati</taxon>
        <taxon>Pseudomonadota</taxon>
        <taxon>Gammaproteobacteria</taxon>
        <taxon>Enterobacterales</taxon>
        <taxon>Enterobacteriaceae</taxon>
        <taxon>Shigella</taxon>
    </lineage>
</organism>
<evidence type="ECO:0000255" key="1">
    <source>
        <dbReference type="HAMAP-Rule" id="MF_00044"/>
    </source>
</evidence>
<name>SYD_SHISS</name>